<organism>
    <name type="scientific">Sclerotinia sclerotiorum (strain ATCC 18683 / 1980 / Ss-1)</name>
    <name type="common">White mold</name>
    <name type="synonym">Whetzelinia sclerotiorum</name>
    <dbReference type="NCBI Taxonomy" id="665079"/>
    <lineage>
        <taxon>Eukaryota</taxon>
        <taxon>Fungi</taxon>
        <taxon>Dikarya</taxon>
        <taxon>Ascomycota</taxon>
        <taxon>Pezizomycotina</taxon>
        <taxon>Leotiomycetes</taxon>
        <taxon>Helotiales</taxon>
        <taxon>Sclerotiniaceae</taxon>
        <taxon>Sclerotinia</taxon>
    </lineage>
</organism>
<gene>
    <name type="ORF">SS1G_14022</name>
</gene>
<accession>A7F8U1</accession>
<evidence type="ECO:0000250" key="1"/>
<evidence type="ECO:0000305" key="2"/>
<name>MTLD_SCLS1</name>
<sequence>MGLKAVHFGAGNIGRGFVAEFLHKSGYEVVFCDVMDSIIQKLQTTPSYKVIQVGAEGTSEDTITNYRAINSKTHEADVIEEIRTADVVTCSVGPNILKFIAPVIAKGIDGRSNDATPIAVIACENAIGATDTLANHIKGDHTPQERLDDHHQRARYANSAIDRIVPAQDPDAGLDVKLEKFYEWVVDRTPFSDHEPPAIQGIKWVDDLIPYIERKLFTVNTGHAAAAYHGYYHQKATVYDALQDPNILKEVHAALEETSRLIVGKHGIEAQEQKDYVDKIITRIGNPHLEDAVERVGRAPLRKLSRKERFIAPAAELAEEGKDFTALLDAAEMAFRFQNVEGDEESKELAKIMSENSAEQVVEKVCGLQSDHPLFPHVVAVVKKVQADE</sequence>
<protein>
    <recommendedName>
        <fullName>Mannitol-1-phosphate 5-dehydrogenase</fullName>
        <shortName>M1PDH</shortName>
        <shortName>MPD</shortName>
        <shortName>MPDH</shortName>
        <ecNumber>1.1.1.17</ecNumber>
    </recommendedName>
</protein>
<comment type="function">
    <text evidence="1">Catalyzes the NAD(H)-dependent interconversion of D-fructose 6-phosphate and D-mannitol 1-phosphate in the mannitol metabolic pathway.</text>
</comment>
<comment type="catalytic activity">
    <reaction>
        <text>D-mannitol 1-phosphate + NAD(+) = beta-D-fructose 6-phosphate + NADH + H(+)</text>
        <dbReference type="Rhea" id="RHEA:19661"/>
        <dbReference type="ChEBI" id="CHEBI:15378"/>
        <dbReference type="ChEBI" id="CHEBI:57540"/>
        <dbReference type="ChEBI" id="CHEBI:57634"/>
        <dbReference type="ChEBI" id="CHEBI:57945"/>
        <dbReference type="ChEBI" id="CHEBI:61381"/>
        <dbReference type="EC" id="1.1.1.17"/>
    </reaction>
</comment>
<comment type="subunit">
    <text evidence="1">Monomer.</text>
</comment>
<comment type="similarity">
    <text evidence="2">Belongs to the mannitol dehydrogenase family.</text>
</comment>
<feature type="chain" id="PRO_0000371537" description="Mannitol-1-phosphate 5-dehydrogenase">
    <location>
        <begin position="1"/>
        <end position="389"/>
    </location>
</feature>
<feature type="active site" evidence="1">
    <location>
        <position position="215"/>
    </location>
</feature>
<feature type="binding site" evidence="1">
    <location>
        <begin position="5"/>
        <end position="16"/>
    </location>
    <ligand>
        <name>NAD(+)</name>
        <dbReference type="ChEBI" id="CHEBI:57540"/>
    </ligand>
</feature>
<dbReference type="EC" id="1.1.1.17"/>
<dbReference type="EMBL" id="CH476648">
    <property type="protein sequence ID" value="EDN99162.1"/>
    <property type="molecule type" value="Genomic_DNA"/>
</dbReference>
<dbReference type="RefSeq" id="XP_001585162.1">
    <property type="nucleotide sequence ID" value="XM_001585112.1"/>
</dbReference>
<dbReference type="SMR" id="A7F8U1"/>
<dbReference type="STRING" id="665079.A7F8U1"/>
<dbReference type="GeneID" id="5481092"/>
<dbReference type="KEGG" id="ssl:SS1G_14022"/>
<dbReference type="VEuPathDB" id="FungiDB:sscle_11g086680"/>
<dbReference type="InParanoid" id="A7F8U1"/>
<dbReference type="OMA" id="APFIERK"/>
<dbReference type="OrthoDB" id="418169at2759"/>
<dbReference type="Proteomes" id="UP000001312">
    <property type="component" value="Unassembled WGS sequence"/>
</dbReference>
<dbReference type="GO" id="GO:0005829">
    <property type="term" value="C:cytosol"/>
    <property type="evidence" value="ECO:0000318"/>
    <property type="project" value="GO_Central"/>
</dbReference>
<dbReference type="GO" id="GO:0008926">
    <property type="term" value="F:mannitol-1-phosphate 5-dehydrogenase activity"/>
    <property type="evidence" value="ECO:0000318"/>
    <property type="project" value="GO_Central"/>
</dbReference>
<dbReference type="GO" id="GO:0019592">
    <property type="term" value="P:mannitol catabolic process"/>
    <property type="evidence" value="ECO:0000318"/>
    <property type="project" value="GO_Central"/>
</dbReference>
<dbReference type="Gene3D" id="1.10.1040.10">
    <property type="entry name" value="N-(1-d-carboxylethyl)-l-norvaline Dehydrogenase, domain 2"/>
    <property type="match status" value="1"/>
</dbReference>
<dbReference type="Gene3D" id="3.40.50.720">
    <property type="entry name" value="NAD(P)-binding Rossmann-like Domain"/>
    <property type="match status" value="1"/>
</dbReference>
<dbReference type="HAMAP" id="MF_00196">
    <property type="entry name" value="Mannitol_dehydrog"/>
    <property type="match status" value="1"/>
</dbReference>
<dbReference type="InterPro" id="IPR008927">
    <property type="entry name" value="6-PGluconate_DH-like_C_sf"/>
</dbReference>
<dbReference type="InterPro" id="IPR013328">
    <property type="entry name" value="6PGD_dom2"/>
</dbReference>
<dbReference type="InterPro" id="IPR023028">
    <property type="entry name" value="Mannitol_1_phos_5_DH"/>
</dbReference>
<dbReference type="InterPro" id="IPR000669">
    <property type="entry name" value="Mannitol_DH"/>
</dbReference>
<dbReference type="InterPro" id="IPR013118">
    <property type="entry name" value="Mannitol_DH_C"/>
</dbReference>
<dbReference type="InterPro" id="IPR013131">
    <property type="entry name" value="Mannitol_DH_N"/>
</dbReference>
<dbReference type="InterPro" id="IPR036291">
    <property type="entry name" value="NAD(P)-bd_dom_sf"/>
</dbReference>
<dbReference type="NCBIfam" id="NF002652">
    <property type="entry name" value="PRK02318.2-5"/>
    <property type="match status" value="1"/>
</dbReference>
<dbReference type="PANTHER" id="PTHR30524:SF0">
    <property type="entry name" value="ALTRONATE OXIDOREDUCTASE-RELATED"/>
    <property type="match status" value="1"/>
</dbReference>
<dbReference type="PANTHER" id="PTHR30524">
    <property type="entry name" value="MANNITOL-1-PHOSPHATE 5-DEHYDROGENASE"/>
    <property type="match status" value="1"/>
</dbReference>
<dbReference type="Pfam" id="PF01232">
    <property type="entry name" value="Mannitol_dh"/>
    <property type="match status" value="1"/>
</dbReference>
<dbReference type="Pfam" id="PF08125">
    <property type="entry name" value="Mannitol_dh_C"/>
    <property type="match status" value="1"/>
</dbReference>
<dbReference type="PRINTS" id="PR00084">
    <property type="entry name" value="MTLDHDRGNASE"/>
</dbReference>
<dbReference type="SUPFAM" id="SSF48179">
    <property type="entry name" value="6-phosphogluconate dehydrogenase C-terminal domain-like"/>
    <property type="match status" value="1"/>
</dbReference>
<dbReference type="SUPFAM" id="SSF51735">
    <property type="entry name" value="NAD(P)-binding Rossmann-fold domains"/>
    <property type="match status" value="1"/>
</dbReference>
<proteinExistence type="inferred from homology"/>
<reference key="1">
    <citation type="journal article" date="2011" name="PLoS Genet.">
        <title>Genomic analysis of the necrotrophic fungal pathogens Sclerotinia sclerotiorum and Botrytis cinerea.</title>
        <authorList>
            <person name="Amselem J."/>
            <person name="Cuomo C.A."/>
            <person name="van Kan J.A.L."/>
            <person name="Viaud M."/>
            <person name="Benito E.P."/>
            <person name="Couloux A."/>
            <person name="Coutinho P.M."/>
            <person name="de Vries R.P."/>
            <person name="Dyer P.S."/>
            <person name="Fillinger S."/>
            <person name="Fournier E."/>
            <person name="Gout L."/>
            <person name="Hahn M."/>
            <person name="Kohn L."/>
            <person name="Lapalu N."/>
            <person name="Plummer K.M."/>
            <person name="Pradier J.-M."/>
            <person name="Quevillon E."/>
            <person name="Sharon A."/>
            <person name="Simon A."/>
            <person name="ten Have A."/>
            <person name="Tudzynski B."/>
            <person name="Tudzynski P."/>
            <person name="Wincker P."/>
            <person name="Andrew M."/>
            <person name="Anthouard V."/>
            <person name="Beever R.E."/>
            <person name="Beffa R."/>
            <person name="Benoit I."/>
            <person name="Bouzid O."/>
            <person name="Brault B."/>
            <person name="Chen Z."/>
            <person name="Choquer M."/>
            <person name="Collemare J."/>
            <person name="Cotton P."/>
            <person name="Danchin E.G."/>
            <person name="Da Silva C."/>
            <person name="Gautier A."/>
            <person name="Giraud C."/>
            <person name="Giraud T."/>
            <person name="Gonzalez C."/>
            <person name="Grossetete S."/>
            <person name="Gueldener U."/>
            <person name="Henrissat B."/>
            <person name="Howlett B.J."/>
            <person name="Kodira C."/>
            <person name="Kretschmer M."/>
            <person name="Lappartient A."/>
            <person name="Leroch M."/>
            <person name="Levis C."/>
            <person name="Mauceli E."/>
            <person name="Neuveglise C."/>
            <person name="Oeser B."/>
            <person name="Pearson M."/>
            <person name="Poulain J."/>
            <person name="Poussereau N."/>
            <person name="Quesneville H."/>
            <person name="Rascle C."/>
            <person name="Schumacher J."/>
            <person name="Segurens B."/>
            <person name="Sexton A."/>
            <person name="Silva E."/>
            <person name="Sirven C."/>
            <person name="Soanes D.M."/>
            <person name="Talbot N.J."/>
            <person name="Templeton M."/>
            <person name="Yandava C."/>
            <person name="Yarden O."/>
            <person name="Zeng Q."/>
            <person name="Rollins J.A."/>
            <person name="Lebrun M.-H."/>
            <person name="Dickman M."/>
        </authorList>
    </citation>
    <scope>NUCLEOTIDE SEQUENCE [LARGE SCALE GENOMIC DNA]</scope>
    <source>
        <strain>ATCC 18683 / 1980 / Ss-1</strain>
    </source>
</reference>
<keyword id="KW-0520">NAD</keyword>
<keyword id="KW-0560">Oxidoreductase</keyword>
<keyword id="KW-1185">Reference proteome</keyword>